<gene>
    <name evidence="1" type="primary">rpsK</name>
    <name type="ordered locus">ETA_31400</name>
</gene>
<protein>
    <recommendedName>
        <fullName evidence="1">Small ribosomal subunit protein uS11</fullName>
    </recommendedName>
    <alternativeName>
        <fullName evidence="2">30S ribosomal protein S11</fullName>
    </alternativeName>
</protein>
<keyword id="KW-1185">Reference proteome</keyword>
<keyword id="KW-0687">Ribonucleoprotein</keyword>
<keyword id="KW-0689">Ribosomal protein</keyword>
<keyword id="KW-0694">RNA-binding</keyword>
<keyword id="KW-0699">rRNA-binding</keyword>
<comment type="function">
    <text evidence="1">Located on the platform of the 30S subunit, it bridges several disparate RNA helices of the 16S rRNA. Forms part of the Shine-Dalgarno cleft in the 70S ribosome.</text>
</comment>
<comment type="subunit">
    <text evidence="1">Part of the 30S ribosomal subunit. Interacts with proteins S7 and S18. Binds to IF-3.</text>
</comment>
<comment type="similarity">
    <text evidence="1">Belongs to the universal ribosomal protein uS11 family.</text>
</comment>
<dbReference type="EMBL" id="CU468135">
    <property type="protein sequence ID" value="CAO98186.1"/>
    <property type="molecule type" value="Genomic_DNA"/>
</dbReference>
<dbReference type="RefSeq" id="WP_004160563.1">
    <property type="nucleotide sequence ID" value="NC_010694.1"/>
</dbReference>
<dbReference type="SMR" id="B2VK73"/>
<dbReference type="STRING" id="465817.ETA_31400"/>
<dbReference type="GeneID" id="97604587"/>
<dbReference type="KEGG" id="eta:ETA_31400"/>
<dbReference type="eggNOG" id="COG0100">
    <property type="taxonomic scope" value="Bacteria"/>
</dbReference>
<dbReference type="HOGENOM" id="CLU_072439_5_0_6"/>
<dbReference type="OrthoDB" id="9806415at2"/>
<dbReference type="Proteomes" id="UP000001726">
    <property type="component" value="Chromosome"/>
</dbReference>
<dbReference type="GO" id="GO:1990904">
    <property type="term" value="C:ribonucleoprotein complex"/>
    <property type="evidence" value="ECO:0007669"/>
    <property type="project" value="UniProtKB-KW"/>
</dbReference>
<dbReference type="GO" id="GO:0005840">
    <property type="term" value="C:ribosome"/>
    <property type="evidence" value="ECO:0007669"/>
    <property type="project" value="UniProtKB-KW"/>
</dbReference>
<dbReference type="GO" id="GO:0019843">
    <property type="term" value="F:rRNA binding"/>
    <property type="evidence" value="ECO:0007669"/>
    <property type="project" value="UniProtKB-UniRule"/>
</dbReference>
<dbReference type="GO" id="GO:0003735">
    <property type="term" value="F:structural constituent of ribosome"/>
    <property type="evidence" value="ECO:0007669"/>
    <property type="project" value="InterPro"/>
</dbReference>
<dbReference type="GO" id="GO:0006412">
    <property type="term" value="P:translation"/>
    <property type="evidence" value="ECO:0007669"/>
    <property type="project" value="UniProtKB-UniRule"/>
</dbReference>
<dbReference type="FunFam" id="3.30.420.80:FF:000001">
    <property type="entry name" value="30S ribosomal protein S11"/>
    <property type="match status" value="1"/>
</dbReference>
<dbReference type="Gene3D" id="3.30.420.80">
    <property type="entry name" value="Ribosomal protein S11"/>
    <property type="match status" value="1"/>
</dbReference>
<dbReference type="HAMAP" id="MF_01310">
    <property type="entry name" value="Ribosomal_uS11"/>
    <property type="match status" value="1"/>
</dbReference>
<dbReference type="InterPro" id="IPR001971">
    <property type="entry name" value="Ribosomal_uS11"/>
</dbReference>
<dbReference type="InterPro" id="IPR019981">
    <property type="entry name" value="Ribosomal_uS11_bac-type"/>
</dbReference>
<dbReference type="InterPro" id="IPR018102">
    <property type="entry name" value="Ribosomal_uS11_CS"/>
</dbReference>
<dbReference type="InterPro" id="IPR036967">
    <property type="entry name" value="Ribosomal_uS11_sf"/>
</dbReference>
<dbReference type="NCBIfam" id="NF003698">
    <property type="entry name" value="PRK05309.1"/>
    <property type="match status" value="1"/>
</dbReference>
<dbReference type="NCBIfam" id="TIGR03632">
    <property type="entry name" value="uS11_bact"/>
    <property type="match status" value="1"/>
</dbReference>
<dbReference type="PANTHER" id="PTHR11759">
    <property type="entry name" value="40S RIBOSOMAL PROTEIN S14/30S RIBOSOMAL PROTEIN S11"/>
    <property type="match status" value="1"/>
</dbReference>
<dbReference type="Pfam" id="PF00411">
    <property type="entry name" value="Ribosomal_S11"/>
    <property type="match status" value="1"/>
</dbReference>
<dbReference type="PIRSF" id="PIRSF002131">
    <property type="entry name" value="Ribosomal_S11"/>
    <property type="match status" value="1"/>
</dbReference>
<dbReference type="SUPFAM" id="SSF53137">
    <property type="entry name" value="Translational machinery components"/>
    <property type="match status" value="1"/>
</dbReference>
<dbReference type="PROSITE" id="PS00054">
    <property type="entry name" value="RIBOSOMAL_S11"/>
    <property type="match status" value="1"/>
</dbReference>
<reference key="1">
    <citation type="journal article" date="2008" name="Environ. Microbiol.">
        <title>The genome of Erwinia tasmaniensis strain Et1/99, a non-pathogenic bacterium in the genus Erwinia.</title>
        <authorList>
            <person name="Kube M."/>
            <person name="Migdoll A.M."/>
            <person name="Mueller I."/>
            <person name="Kuhl H."/>
            <person name="Beck A."/>
            <person name="Reinhardt R."/>
            <person name="Geider K."/>
        </authorList>
    </citation>
    <scope>NUCLEOTIDE SEQUENCE [LARGE SCALE GENOMIC DNA]</scope>
    <source>
        <strain>DSM 17950 / CFBP 7177 / CIP 109463 / NCPPB 4357 / Et1/99</strain>
    </source>
</reference>
<sequence length="129" mass="13817">MAKAPVRARKRVRKQVSDGVAHVHASFNNTIVTITDRQGNALGWATAGGSGFRGSRKSTPFAAQVAAERCAEAVKDYGIKNLEVMVKGPGPGRESTIRALNAAGFRITNITDVTPIPHNGCRPPKKRRV</sequence>
<accession>B2VK73</accession>
<feature type="chain" id="PRO_1000141095" description="Small ribosomal subunit protein uS11">
    <location>
        <begin position="1"/>
        <end position="129"/>
    </location>
</feature>
<organism>
    <name type="scientific">Erwinia tasmaniensis (strain DSM 17950 / CFBP 7177 / CIP 109463 / NCPPB 4357 / Et1/99)</name>
    <dbReference type="NCBI Taxonomy" id="465817"/>
    <lineage>
        <taxon>Bacteria</taxon>
        <taxon>Pseudomonadati</taxon>
        <taxon>Pseudomonadota</taxon>
        <taxon>Gammaproteobacteria</taxon>
        <taxon>Enterobacterales</taxon>
        <taxon>Erwiniaceae</taxon>
        <taxon>Erwinia</taxon>
    </lineage>
</organism>
<evidence type="ECO:0000255" key="1">
    <source>
        <dbReference type="HAMAP-Rule" id="MF_01310"/>
    </source>
</evidence>
<evidence type="ECO:0000305" key="2"/>
<name>RS11_ERWT9</name>
<proteinExistence type="inferred from homology"/>